<dbReference type="EC" id="1.1.1.94" evidence="1"/>
<dbReference type="EMBL" id="CP001657">
    <property type="protein sequence ID" value="ACT15096.1"/>
    <property type="molecule type" value="Genomic_DNA"/>
</dbReference>
<dbReference type="RefSeq" id="WP_015842173.1">
    <property type="nucleotide sequence ID" value="NC_012917.1"/>
</dbReference>
<dbReference type="SMR" id="C6DIA2"/>
<dbReference type="STRING" id="561230.PC1_4081"/>
<dbReference type="GeneID" id="67796060"/>
<dbReference type="KEGG" id="pct:PC1_4081"/>
<dbReference type="eggNOG" id="COG0240">
    <property type="taxonomic scope" value="Bacteria"/>
</dbReference>
<dbReference type="HOGENOM" id="CLU_033449_0_2_6"/>
<dbReference type="OrthoDB" id="9812273at2"/>
<dbReference type="UniPathway" id="UPA00940"/>
<dbReference type="Proteomes" id="UP000002736">
    <property type="component" value="Chromosome"/>
</dbReference>
<dbReference type="GO" id="GO:0005829">
    <property type="term" value="C:cytosol"/>
    <property type="evidence" value="ECO:0007669"/>
    <property type="project" value="TreeGrafter"/>
</dbReference>
<dbReference type="GO" id="GO:0047952">
    <property type="term" value="F:glycerol-3-phosphate dehydrogenase [NAD(P)+] activity"/>
    <property type="evidence" value="ECO:0007669"/>
    <property type="project" value="UniProtKB-UniRule"/>
</dbReference>
<dbReference type="GO" id="GO:0051287">
    <property type="term" value="F:NAD binding"/>
    <property type="evidence" value="ECO:0007669"/>
    <property type="project" value="InterPro"/>
</dbReference>
<dbReference type="GO" id="GO:0005975">
    <property type="term" value="P:carbohydrate metabolic process"/>
    <property type="evidence" value="ECO:0007669"/>
    <property type="project" value="InterPro"/>
</dbReference>
<dbReference type="GO" id="GO:0046167">
    <property type="term" value="P:glycerol-3-phosphate biosynthetic process"/>
    <property type="evidence" value="ECO:0007669"/>
    <property type="project" value="UniProtKB-UniRule"/>
</dbReference>
<dbReference type="GO" id="GO:0046168">
    <property type="term" value="P:glycerol-3-phosphate catabolic process"/>
    <property type="evidence" value="ECO:0007669"/>
    <property type="project" value="InterPro"/>
</dbReference>
<dbReference type="GO" id="GO:0046474">
    <property type="term" value="P:glycerophospholipid biosynthetic process"/>
    <property type="evidence" value="ECO:0007669"/>
    <property type="project" value="TreeGrafter"/>
</dbReference>
<dbReference type="FunFam" id="1.10.1040.10:FF:000001">
    <property type="entry name" value="Glycerol-3-phosphate dehydrogenase [NAD(P)+]"/>
    <property type="match status" value="1"/>
</dbReference>
<dbReference type="FunFam" id="3.40.50.720:FF:000019">
    <property type="entry name" value="Glycerol-3-phosphate dehydrogenase [NAD(P)+]"/>
    <property type="match status" value="1"/>
</dbReference>
<dbReference type="Gene3D" id="1.10.1040.10">
    <property type="entry name" value="N-(1-d-carboxylethyl)-l-norvaline Dehydrogenase, domain 2"/>
    <property type="match status" value="1"/>
</dbReference>
<dbReference type="Gene3D" id="3.40.50.720">
    <property type="entry name" value="NAD(P)-binding Rossmann-like Domain"/>
    <property type="match status" value="1"/>
</dbReference>
<dbReference type="HAMAP" id="MF_00394">
    <property type="entry name" value="NAD_Glyc3P_dehydrog"/>
    <property type="match status" value="1"/>
</dbReference>
<dbReference type="InterPro" id="IPR008927">
    <property type="entry name" value="6-PGluconate_DH-like_C_sf"/>
</dbReference>
<dbReference type="InterPro" id="IPR013328">
    <property type="entry name" value="6PGD_dom2"/>
</dbReference>
<dbReference type="InterPro" id="IPR006168">
    <property type="entry name" value="G3P_DH_NAD-dep"/>
</dbReference>
<dbReference type="InterPro" id="IPR006109">
    <property type="entry name" value="G3P_DH_NAD-dep_C"/>
</dbReference>
<dbReference type="InterPro" id="IPR011128">
    <property type="entry name" value="G3P_DH_NAD-dep_N"/>
</dbReference>
<dbReference type="InterPro" id="IPR036291">
    <property type="entry name" value="NAD(P)-bd_dom_sf"/>
</dbReference>
<dbReference type="NCBIfam" id="NF000939">
    <property type="entry name" value="PRK00094.1-1"/>
    <property type="match status" value="1"/>
</dbReference>
<dbReference type="NCBIfam" id="NF000940">
    <property type="entry name" value="PRK00094.1-2"/>
    <property type="match status" value="1"/>
</dbReference>
<dbReference type="NCBIfam" id="NF000942">
    <property type="entry name" value="PRK00094.1-4"/>
    <property type="match status" value="1"/>
</dbReference>
<dbReference type="PANTHER" id="PTHR11728">
    <property type="entry name" value="GLYCEROL-3-PHOSPHATE DEHYDROGENASE"/>
    <property type="match status" value="1"/>
</dbReference>
<dbReference type="PANTHER" id="PTHR11728:SF1">
    <property type="entry name" value="GLYCEROL-3-PHOSPHATE DEHYDROGENASE [NAD(+)] 2, CHLOROPLASTIC"/>
    <property type="match status" value="1"/>
</dbReference>
<dbReference type="Pfam" id="PF07479">
    <property type="entry name" value="NAD_Gly3P_dh_C"/>
    <property type="match status" value="1"/>
</dbReference>
<dbReference type="Pfam" id="PF01210">
    <property type="entry name" value="NAD_Gly3P_dh_N"/>
    <property type="match status" value="1"/>
</dbReference>
<dbReference type="PIRSF" id="PIRSF000114">
    <property type="entry name" value="Glycerol-3-P_dh"/>
    <property type="match status" value="1"/>
</dbReference>
<dbReference type="PRINTS" id="PR00077">
    <property type="entry name" value="GPDHDRGNASE"/>
</dbReference>
<dbReference type="SUPFAM" id="SSF48179">
    <property type="entry name" value="6-phosphogluconate dehydrogenase C-terminal domain-like"/>
    <property type="match status" value="1"/>
</dbReference>
<dbReference type="SUPFAM" id="SSF51735">
    <property type="entry name" value="NAD(P)-binding Rossmann-fold domains"/>
    <property type="match status" value="1"/>
</dbReference>
<dbReference type="PROSITE" id="PS00957">
    <property type="entry name" value="NAD_G3PDH"/>
    <property type="match status" value="1"/>
</dbReference>
<keyword id="KW-0963">Cytoplasm</keyword>
<keyword id="KW-0444">Lipid biosynthesis</keyword>
<keyword id="KW-0443">Lipid metabolism</keyword>
<keyword id="KW-0520">NAD</keyword>
<keyword id="KW-0521">NADP</keyword>
<keyword id="KW-0547">Nucleotide-binding</keyword>
<keyword id="KW-0560">Oxidoreductase</keyword>
<keyword id="KW-0594">Phospholipid biosynthesis</keyword>
<keyword id="KW-1208">Phospholipid metabolism</keyword>
<proteinExistence type="inferred from homology"/>
<name>GPDA_PECCP</name>
<accession>C6DIA2</accession>
<evidence type="ECO:0000255" key="1">
    <source>
        <dbReference type="HAMAP-Rule" id="MF_00394"/>
    </source>
</evidence>
<organism>
    <name type="scientific">Pectobacterium carotovorum subsp. carotovorum (strain PC1)</name>
    <dbReference type="NCBI Taxonomy" id="561230"/>
    <lineage>
        <taxon>Bacteria</taxon>
        <taxon>Pseudomonadati</taxon>
        <taxon>Pseudomonadota</taxon>
        <taxon>Gammaproteobacteria</taxon>
        <taxon>Enterobacterales</taxon>
        <taxon>Pectobacteriaceae</taxon>
        <taxon>Pectobacterium</taxon>
    </lineage>
</organism>
<feature type="chain" id="PRO_1000205863" description="Glycerol-3-phosphate dehydrogenase [NAD(P)+]">
    <location>
        <begin position="1"/>
        <end position="339"/>
    </location>
</feature>
<feature type="active site" description="Proton acceptor" evidence="1">
    <location>
        <position position="195"/>
    </location>
</feature>
<feature type="binding site" evidence="1">
    <location>
        <position position="15"/>
    </location>
    <ligand>
        <name>NADPH</name>
        <dbReference type="ChEBI" id="CHEBI:57783"/>
    </ligand>
</feature>
<feature type="binding site" evidence="1">
    <location>
        <position position="16"/>
    </location>
    <ligand>
        <name>NADPH</name>
        <dbReference type="ChEBI" id="CHEBI:57783"/>
    </ligand>
</feature>
<feature type="binding site" evidence="1">
    <location>
        <position position="36"/>
    </location>
    <ligand>
        <name>NADPH</name>
        <dbReference type="ChEBI" id="CHEBI:57783"/>
    </ligand>
</feature>
<feature type="binding site" evidence="1">
    <location>
        <position position="110"/>
    </location>
    <ligand>
        <name>NADPH</name>
        <dbReference type="ChEBI" id="CHEBI:57783"/>
    </ligand>
</feature>
<feature type="binding site" evidence="1">
    <location>
        <position position="110"/>
    </location>
    <ligand>
        <name>sn-glycerol 3-phosphate</name>
        <dbReference type="ChEBI" id="CHEBI:57597"/>
    </ligand>
</feature>
<feature type="binding site" evidence="1">
    <location>
        <position position="139"/>
    </location>
    <ligand>
        <name>sn-glycerol 3-phosphate</name>
        <dbReference type="ChEBI" id="CHEBI:57597"/>
    </ligand>
</feature>
<feature type="binding site" evidence="1">
    <location>
        <position position="141"/>
    </location>
    <ligand>
        <name>sn-glycerol 3-phosphate</name>
        <dbReference type="ChEBI" id="CHEBI:57597"/>
    </ligand>
</feature>
<feature type="binding site" evidence="1">
    <location>
        <position position="143"/>
    </location>
    <ligand>
        <name>NADPH</name>
        <dbReference type="ChEBI" id="CHEBI:57783"/>
    </ligand>
</feature>
<feature type="binding site" evidence="1">
    <location>
        <position position="195"/>
    </location>
    <ligand>
        <name>sn-glycerol 3-phosphate</name>
        <dbReference type="ChEBI" id="CHEBI:57597"/>
    </ligand>
</feature>
<feature type="binding site" evidence="1">
    <location>
        <position position="248"/>
    </location>
    <ligand>
        <name>sn-glycerol 3-phosphate</name>
        <dbReference type="ChEBI" id="CHEBI:57597"/>
    </ligand>
</feature>
<feature type="binding site" evidence="1">
    <location>
        <position position="258"/>
    </location>
    <ligand>
        <name>sn-glycerol 3-phosphate</name>
        <dbReference type="ChEBI" id="CHEBI:57597"/>
    </ligand>
</feature>
<feature type="binding site" evidence="1">
    <location>
        <position position="259"/>
    </location>
    <ligand>
        <name>NADPH</name>
        <dbReference type="ChEBI" id="CHEBI:57783"/>
    </ligand>
</feature>
<feature type="binding site" evidence="1">
    <location>
        <position position="259"/>
    </location>
    <ligand>
        <name>sn-glycerol 3-phosphate</name>
        <dbReference type="ChEBI" id="CHEBI:57597"/>
    </ligand>
</feature>
<feature type="binding site" evidence="1">
    <location>
        <position position="260"/>
    </location>
    <ligand>
        <name>sn-glycerol 3-phosphate</name>
        <dbReference type="ChEBI" id="CHEBI:57597"/>
    </ligand>
</feature>
<feature type="binding site" evidence="1">
    <location>
        <position position="283"/>
    </location>
    <ligand>
        <name>NADPH</name>
        <dbReference type="ChEBI" id="CHEBI:57783"/>
    </ligand>
</feature>
<feature type="binding site" evidence="1">
    <location>
        <position position="285"/>
    </location>
    <ligand>
        <name>NADPH</name>
        <dbReference type="ChEBI" id="CHEBI:57783"/>
    </ligand>
</feature>
<comment type="function">
    <text evidence="1">Catalyzes the reduction of the glycolytic intermediate dihydroxyacetone phosphate (DHAP) to sn-glycerol 3-phosphate (G3P), the key precursor for phospholipid synthesis.</text>
</comment>
<comment type="catalytic activity">
    <reaction evidence="1">
        <text>sn-glycerol 3-phosphate + NAD(+) = dihydroxyacetone phosphate + NADH + H(+)</text>
        <dbReference type="Rhea" id="RHEA:11092"/>
        <dbReference type="ChEBI" id="CHEBI:15378"/>
        <dbReference type="ChEBI" id="CHEBI:57540"/>
        <dbReference type="ChEBI" id="CHEBI:57597"/>
        <dbReference type="ChEBI" id="CHEBI:57642"/>
        <dbReference type="ChEBI" id="CHEBI:57945"/>
        <dbReference type="EC" id="1.1.1.94"/>
    </reaction>
    <physiologicalReaction direction="right-to-left" evidence="1">
        <dbReference type="Rhea" id="RHEA:11094"/>
    </physiologicalReaction>
</comment>
<comment type="catalytic activity">
    <reaction evidence="1">
        <text>sn-glycerol 3-phosphate + NADP(+) = dihydroxyacetone phosphate + NADPH + H(+)</text>
        <dbReference type="Rhea" id="RHEA:11096"/>
        <dbReference type="ChEBI" id="CHEBI:15378"/>
        <dbReference type="ChEBI" id="CHEBI:57597"/>
        <dbReference type="ChEBI" id="CHEBI:57642"/>
        <dbReference type="ChEBI" id="CHEBI:57783"/>
        <dbReference type="ChEBI" id="CHEBI:58349"/>
        <dbReference type="EC" id="1.1.1.94"/>
    </reaction>
    <physiologicalReaction direction="right-to-left" evidence="1">
        <dbReference type="Rhea" id="RHEA:11098"/>
    </physiologicalReaction>
</comment>
<comment type="pathway">
    <text evidence="1">Membrane lipid metabolism; glycerophospholipid metabolism.</text>
</comment>
<comment type="subcellular location">
    <subcellularLocation>
        <location evidence="1">Cytoplasm</location>
    </subcellularLocation>
</comment>
<comment type="similarity">
    <text evidence="1">Belongs to the NAD-dependent glycerol-3-phosphate dehydrogenase family.</text>
</comment>
<reference key="1">
    <citation type="submission" date="2009-07" db="EMBL/GenBank/DDBJ databases">
        <title>Complete sequence of Pectobacterium carotovorum subsp. carotovorum PC1.</title>
        <authorList>
            <consortium name="US DOE Joint Genome Institute"/>
            <person name="Lucas S."/>
            <person name="Copeland A."/>
            <person name="Lapidus A."/>
            <person name="Glavina del Rio T."/>
            <person name="Tice H."/>
            <person name="Bruce D."/>
            <person name="Goodwin L."/>
            <person name="Pitluck S."/>
            <person name="Munk A.C."/>
            <person name="Brettin T."/>
            <person name="Detter J.C."/>
            <person name="Han C."/>
            <person name="Tapia R."/>
            <person name="Larimer F."/>
            <person name="Land M."/>
            <person name="Hauser L."/>
            <person name="Kyrpides N."/>
            <person name="Mikhailova N."/>
            <person name="Balakrishnan V."/>
            <person name="Glasner J."/>
            <person name="Perna N.T."/>
        </authorList>
    </citation>
    <scope>NUCLEOTIDE SEQUENCE [LARGE SCALE GENOMIC DNA]</scope>
    <source>
        <strain>PC1</strain>
    </source>
</reference>
<sequence length="339" mass="36082">MNASDASMTVIGAGSYGTALAITLARNGHRVVLWGHNPAHIQALQAARCNQAFLPDVPFPDSLQLETNLGQALAASRNVLVVVPSHVFGDVLRQLKPHLRADARIVWATKGLEAETGRLLQDVAREALGETIPLAVVSGPTFAKELAAGMPTAIALASTDREFADDLQRLLHCGKSFRVYSNPDFIGVQLGGAVKNVIAIGAGMSDGIGFGANARTALITRGLAEMTRLGTALGADPTTFMGMAGLGDLVLTCTDNQSRNRRFGMMLGQGMDVQSAQDSIGQVVEGYRNTKEVLALAQRYGVEMPITEQLWQVLYCGKDAREAALSLLGRTRKDETAKL</sequence>
<gene>
    <name evidence="1" type="primary">gpsA</name>
    <name type="ordered locus">PC1_4081</name>
</gene>
<protein>
    <recommendedName>
        <fullName evidence="1">Glycerol-3-phosphate dehydrogenase [NAD(P)+]</fullName>
        <ecNumber evidence="1">1.1.1.94</ecNumber>
    </recommendedName>
    <alternativeName>
        <fullName evidence="1">NAD(P)(+)-dependent glycerol-3-phosphate dehydrogenase</fullName>
    </alternativeName>
    <alternativeName>
        <fullName evidence="1">NAD(P)H-dependent dihydroxyacetone-phosphate reductase</fullName>
    </alternativeName>
</protein>